<comment type="function">
    <text evidence="1">Catalyzes the transfer of the enolpyruvyl moiety of phosphoenolpyruvate (PEP) to the 5-hydroxyl of shikimate-3-phosphate (S3P) to produce enolpyruvyl shikimate-3-phosphate and inorganic phosphate.</text>
</comment>
<comment type="catalytic activity">
    <reaction evidence="1">
        <text>3-phosphoshikimate + phosphoenolpyruvate = 5-O-(1-carboxyvinyl)-3-phosphoshikimate + phosphate</text>
        <dbReference type="Rhea" id="RHEA:21256"/>
        <dbReference type="ChEBI" id="CHEBI:43474"/>
        <dbReference type="ChEBI" id="CHEBI:57701"/>
        <dbReference type="ChEBI" id="CHEBI:58702"/>
        <dbReference type="ChEBI" id="CHEBI:145989"/>
        <dbReference type="EC" id="2.5.1.19"/>
    </reaction>
    <physiologicalReaction direction="left-to-right" evidence="1">
        <dbReference type="Rhea" id="RHEA:21257"/>
    </physiologicalReaction>
</comment>
<comment type="pathway">
    <text evidence="1">Metabolic intermediate biosynthesis; chorismate biosynthesis.</text>
</comment>
<comment type="subunit">
    <text evidence="1">Monomer.</text>
</comment>
<comment type="subcellular location">
    <subcellularLocation>
        <location evidence="1">Cytoplasm</location>
    </subcellularLocation>
</comment>
<comment type="similarity">
    <text evidence="1 2">Belongs to the EPSP synthase family.</text>
</comment>
<sequence>MFGPVSVEMIIERVDEVRGKVKAPPSKSYTHRAYFLSLLADSPSKVMNPLISEDTIASLDAISKFGAQVNGNKIIPPQELTPGKIDARESGTTARISLAVASLARGTSVITGKGRLVERPFKPLVDALRSLKVKISGEKLPIAVEGGNPVGEYVKVDCSLSSQFGTAMLILASKIGLTVEMLNPVSRPYIEVTLKVMESFGIEFERNGFKVKVHPGIRGSKFHVPGDYSSASFFLAAGALYGKVKVSNLVKDDPQADARIIDILEEFGADVKVGRKYVVVERNEMKPINVDCSNFPDLFPILAVLASYAEGKSVITGRQLRLKESDRVKAVAVNLRKAGIKVKELPNGLEIVGGKPRGFTVESFNDHRIVMAMAILGLGAEGKTIIKDPHVVSKSYPSFFLDLRRVLNEG</sequence>
<dbReference type="EC" id="2.5.1.19" evidence="1"/>
<dbReference type="EMBL" id="AJ248284">
    <property type="protein sequence ID" value="CAB49378.1"/>
    <property type="molecule type" value="Genomic_DNA"/>
</dbReference>
<dbReference type="EMBL" id="HE613800">
    <property type="protein sequence ID" value="CCE69839.1"/>
    <property type="molecule type" value="Genomic_DNA"/>
</dbReference>
<dbReference type="PIR" id="C75162">
    <property type="entry name" value="C75162"/>
</dbReference>
<dbReference type="SMR" id="Q9V1H1"/>
<dbReference type="STRING" id="272844.PAB0306"/>
<dbReference type="KEGG" id="pab:PAB0306"/>
<dbReference type="PATRIC" id="fig|272844.11.peg.483"/>
<dbReference type="eggNOG" id="arCOG04134">
    <property type="taxonomic scope" value="Archaea"/>
</dbReference>
<dbReference type="HOGENOM" id="CLU_024321_0_0_2"/>
<dbReference type="PhylomeDB" id="Q9V1H1"/>
<dbReference type="UniPathway" id="UPA00053"/>
<dbReference type="Proteomes" id="UP000000810">
    <property type="component" value="Chromosome"/>
</dbReference>
<dbReference type="Proteomes" id="UP000009139">
    <property type="component" value="Chromosome"/>
</dbReference>
<dbReference type="GO" id="GO:0005737">
    <property type="term" value="C:cytoplasm"/>
    <property type="evidence" value="ECO:0007669"/>
    <property type="project" value="UniProtKB-SubCell"/>
</dbReference>
<dbReference type="GO" id="GO:0003866">
    <property type="term" value="F:3-phosphoshikimate 1-carboxyvinyltransferase activity"/>
    <property type="evidence" value="ECO:0007669"/>
    <property type="project" value="UniProtKB-UniRule"/>
</dbReference>
<dbReference type="GO" id="GO:0008652">
    <property type="term" value="P:amino acid biosynthetic process"/>
    <property type="evidence" value="ECO:0007669"/>
    <property type="project" value="UniProtKB-KW"/>
</dbReference>
<dbReference type="GO" id="GO:0009073">
    <property type="term" value="P:aromatic amino acid family biosynthetic process"/>
    <property type="evidence" value="ECO:0007669"/>
    <property type="project" value="UniProtKB-KW"/>
</dbReference>
<dbReference type="GO" id="GO:0009423">
    <property type="term" value="P:chorismate biosynthetic process"/>
    <property type="evidence" value="ECO:0007669"/>
    <property type="project" value="UniProtKB-UniRule"/>
</dbReference>
<dbReference type="CDD" id="cd01556">
    <property type="entry name" value="EPSP_synthase"/>
    <property type="match status" value="1"/>
</dbReference>
<dbReference type="Gene3D" id="3.65.10.10">
    <property type="entry name" value="Enolpyruvate transferase domain"/>
    <property type="match status" value="2"/>
</dbReference>
<dbReference type="HAMAP" id="MF_00210">
    <property type="entry name" value="EPSP_synth"/>
    <property type="match status" value="1"/>
</dbReference>
<dbReference type="InterPro" id="IPR001986">
    <property type="entry name" value="Enolpyruvate_Tfrase_dom"/>
</dbReference>
<dbReference type="InterPro" id="IPR036968">
    <property type="entry name" value="Enolpyruvate_Tfrase_sf"/>
</dbReference>
<dbReference type="InterPro" id="IPR006264">
    <property type="entry name" value="EPSP_synthase"/>
</dbReference>
<dbReference type="InterPro" id="IPR023193">
    <property type="entry name" value="EPSP_synthase_CS"/>
</dbReference>
<dbReference type="InterPro" id="IPR013792">
    <property type="entry name" value="RNA3'P_cycl/enolpyr_Trfase_a/b"/>
</dbReference>
<dbReference type="NCBIfam" id="TIGR01356">
    <property type="entry name" value="aroA"/>
    <property type="match status" value="1"/>
</dbReference>
<dbReference type="PANTHER" id="PTHR21090">
    <property type="entry name" value="AROM/DEHYDROQUINATE SYNTHASE"/>
    <property type="match status" value="1"/>
</dbReference>
<dbReference type="PANTHER" id="PTHR21090:SF5">
    <property type="entry name" value="PENTAFUNCTIONAL AROM POLYPEPTIDE"/>
    <property type="match status" value="1"/>
</dbReference>
<dbReference type="Pfam" id="PF00275">
    <property type="entry name" value="EPSP_synthase"/>
    <property type="match status" value="1"/>
</dbReference>
<dbReference type="PIRSF" id="PIRSF000505">
    <property type="entry name" value="EPSPS"/>
    <property type="match status" value="1"/>
</dbReference>
<dbReference type="SUPFAM" id="SSF55205">
    <property type="entry name" value="EPT/RTPC-like"/>
    <property type="match status" value="1"/>
</dbReference>
<dbReference type="PROSITE" id="PS00885">
    <property type="entry name" value="EPSP_SYNTHASE_2"/>
    <property type="match status" value="1"/>
</dbReference>
<proteinExistence type="inferred from homology"/>
<accession>Q9V1H1</accession>
<accession>G8ZGG0</accession>
<gene>
    <name evidence="1" type="primary">aroA</name>
    <name type="ordered locus">PYRAB04560</name>
    <name type="ORF">PAB0306</name>
</gene>
<name>AROA_PYRAB</name>
<protein>
    <recommendedName>
        <fullName evidence="1">3-phosphoshikimate 1-carboxyvinyltransferase</fullName>
        <ecNumber evidence="1">2.5.1.19</ecNumber>
    </recommendedName>
    <alternativeName>
        <fullName evidence="1">5-enolpyruvylshikimate-3-phosphate synthase</fullName>
        <shortName evidence="1">EPSP synthase</shortName>
        <shortName evidence="1">EPSPS</shortName>
    </alternativeName>
</protein>
<keyword id="KW-0028">Amino-acid biosynthesis</keyword>
<keyword id="KW-0057">Aromatic amino acid biosynthesis</keyword>
<keyword id="KW-0963">Cytoplasm</keyword>
<keyword id="KW-0808">Transferase</keyword>
<evidence type="ECO:0000255" key="1">
    <source>
        <dbReference type="HAMAP-Rule" id="MF_00210"/>
    </source>
</evidence>
<evidence type="ECO:0000305" key="2"/>
<reference key="1">
    <citation type="journal article" date="2003" name="Mol. Microbiol.">
        <title>An integrated analysis of the genome of the hyperthermophilic archaeon Pyrococcus abyssi.</title>
        <authorList>
            <person name="Cohen G.N."/>
            <person name="Barbe V."/>
            <person name="Flament D."/>
            <person name="Galperin M."/>
            <person name="Heilig R."/>
            <person name="Lecompte O."/>
            <person name="Poch O."/>
            <person name="Prieur D."/>
            <person name="Querellou J."/>
            <person name="Ripp R."/>
            <person name="Thierry J.-C."/>
            <person name="Van der Oost J."/>
            <person name="Weissenbach J."/>
            <person name="Zivanovic Y."/>
            <person name="Forterre P."/>
        </authorList>
    </citation>
    <scope>NUCLEOTIDE SEQUENCE [LARGE SCALE GENOMIC DNA]</scope>
    <source>
        <strain>GE5 / Orsay</strain>
    </source>
</reference>
<reference key="2">
    <citation type="journal article" date="2012" name="Curr. Microbiol.">
        <title>Re-annotation of two hyperthermophilic archaea Pyrococcus abyssi GE5 and Pyrococcus furiosus DSM 3638.</title>
        <authorList>
            <person name="Gao J."/>
            <person name="Wang J."/>
        </authorList>
    </citation>
    <scope>GENOME REANNOTATION</scope>
    <source>
        <strain>GE5 / Orsay</strain>
    </source>
</reference>
<organism>
    <name type="scientific">Pyrococcus abyssi (strain GE5 / Orsay)</name>
    <dbReference type="NCBI Taxonomy" id="272844"/>
    <lineage>
        <taxon>Archaea</taxon>
        <taxon>Methanobacteriati</taxon>
        <taxon>Methanobacteriota</taxon>
        <taxon>Thermococci</taxon>
        <taxon>Thermococcales</taxon>
        <taxon>Thermococcaceae</taxon>
        <taxon>Pyrococcus</taxon>
    </lineage>
</organism>
<feature type="chain" id="PRO_0000088334" description="3-phosphoshikimate 1-carboxyvinyltransferase">
    <location>
        <begin position="1"/>
        <end position="410"/>
    </location>
</feature>
<feature type="active site" description="Proton acceptor" evidence="1">
    <location>
        <position position="297"/>
    </location>
</feature>
<feature type="binding site" evidence="1">
    <location>
        <position position="27"/>
    </location>
    <ligand>
        <name>3-phosphoshikimate</name>
        <dbReference type="ChEBI" id="CHEBI:145989"/>
    </ligand>
</feature>
<feature type="binding site" evidence="1">
    <location>
        <position position="27"/>
    </location>
    <ligand>
        <name>phosphoenolpyruvate</name>
        <dbReference type="ChEBI" id="CHEBI:58702"/>
    </ligand>
</feature>
<feature type="binding site" evidence="1">
    <location>
        <position position="28"/>
    </location>
    <ligand>
        <name>3-phosphoshikimate</name>
        <dbReference type="ChEBI" id="CHEBI:145989"/>
    </ligand>
</feature>
<feature type="binding site" evidence="1">
    <location>
        <position position="32"/>
    </location>
    <ligand>
        <name>3-phosphoshikimate</name>
        <dbReference type="ChEBI" id="CHEBI:145989"/>
    </ligand>
</feature>
<feature type="binding site" evidence="1">
    <location>
        <position position="91"/>
    </location>
    <ligand>
        <name>phosphoenolpyruvate</name>
        <dbReference type="ChEBI" id="CHEBI:58702"/>
    </ligand>
</feature>
<feature type="binding site" evidence="1">
    <location>
        <position position="119"/>
    </location>
    <ligand>
        <name>phosphoenolpyruvate</name>
        <dbReference type="ChEBI" id="CHEBI:58702"/>
    </ligand>
</feature>
<feature type="binding site" evidence="1">
    <location>
        <position position="161"/>
    </location>
    <ligand>
        <name>3-phosphoshikimate</name>
        <dbReference type="ChEBI" id="CHEBI:145989"/>
    </ligand>
</feature>
<feature type="binding site" evidence="1">
    <location>
        <position position="162"/>
    </location>
    <ligand>
        <name>3-phosphoshikimate</name>
        <dbReference type="ChEBI" id="CHEBI:145989"/>
    </ligand>
</feature>
<feature type="binding site" evidence="1">
    <location>
        <position position="163"/>
    </location>
    <ligand>
        <name>3-phosphoshikimate</name>
        <dbReference type="ChEBI" id="CHEBI:145989"/>
    </ligand>
</feature>
<feature type="binding site" evidence="1">
    <location>
        <position position="163"/>
    </location>
    <ligand>
        <name>phosphoenolpyruvate</name>
        <dbReference type="ChEBI" id="CHEBI:58702"/>
    </ligand>
</feature>
<feature type="binding site" evidence="1">
    <location>
        <position position="297"/>
    </location>
    <ligand>
        <name>3-phosphoshikimate</name>
        <dbReference type="ChEBI" id="CHEBI:145989"/>
    </ligand>
</feature>
<feature type="binding site" evidence="1">
    <location>
        <position position="319"/>
    </location>
    <ligand>
        <name>3-phosphoshikimate</name>
        <dbReference type="ChEBI" id="CHEBI:145989"/>
    </ligand>
</feature>
<feature type="binding site" evidence="1">
    <location>
        <position position="323"/>
    </location>
    <ligand>
        <name>3-phosphoshikimate</name>
        <dbReference type="ChEBI" id="CHEBI:145989"/>
    </ligand>
</feature>
<feature type="binding site" evidence="1">
    <location>
        <position position="327"/>
    </location>
    <ligand>
        <name>phosphoenolpyruvate</name>
        <dbReference type="ChEBI" id="CHEBI:58702"/>
    </ligand>
</feature>
<feature type="binding site" evidence="1">
    <location>
        <position position="368"/>
    </location>
    <ligand>
        <name>phosphoenolpyruvate</name>
        <dbReference type="ChEBI" id="CHEBI:58702"/>
    </ligand>
</feature>
<feature type="binding site" evidence="1">
    <location>
        <position position="394"/>
    </location>
    <ligand>
        <name>phosphoenolpyruvate</name>
        <dbReference type="ChEBI" id="CHEBI:58702"/>
    </ligand>
</feature>